<protein>
    <recommendedName>
        <fullName>Lysophosphatidylcholine acyltransferase 1</fullName>
        <shortName>LPC acyltransferase 1</shortName>
        <shortName>LPCAT-1</shortName>
        <shortName>LysoPC acyltransferase 1</shortName>
        <ecNumber evidence="7">2.3.1.23</ecNumber>
    </recommendedName>
    <alternativeName>
        <fullName>1-acylglycerol-3-phosphate O-acyltransferase</fullName>
        <ecNumber evidence="7">2.3.1.51</ecNumber>
    </alternativeName>
    <alternativeName>
        <fullName>1-acylglycerophosphocholine O-acyltransferase</fullName>
    </alternativeName>
    <alternativeName>
        <fullName>1-alkenylglycerophosphocholine O-acyltransferase</fullName>
        <ecNumber evidence="1">2.3.1.25</ecNumber>
    </alternativeName>
    <alternativeName>
        <fullName>1-alkylglycerophosphocholine O-acetyltransferase</fullName>
        <ecNumber evidence="1">2.3.1.67</ecNumber>
    </alternativeName>
    <alternativeName>
        <fullName>Acetyl-CoA:lyso-platelet-activating factor acetyltransferase</fullName>
        <shortName>Acetyl-CoA:lyso-PAF acetyltransferase</shortName>
        <shortName>Lyso-PAF acetyltransferase</shortName>
        <shortName>LysoPAFAT</shortName>
    </alternativeName>
    <alternativeName>
        <fullName>Acyltransferase-like 2</fullName>
    </alternativeName>
</protein>
<feature type="chain" id="PRO_0000247066" description="Lysophosphatidylcholine acyltransferase 1">
    <location>
        <begin position="1"/>
        <end position="534"/>
    </location>
</feature>
<feature type="topological domain" description="Cytoplasmic" evidence="3">
    <location>
        <begin position="1"/>
        <end position="57"/>
    </location>
</feature>
<feature type="transmembrane region" description="Helical; Signal-anchor for type II membrane protein" evidence="3">
    <location>
        <begin position="58"/>
        <end position="78"/>
    </location>
</feature>
<feature type="topological domain" description="Lumenal" evidence="3">
    <location>
        <begin position="79"/>
        <end position="534"/>
    </location>
</feature>
<feature type="domain" description="EF-hand 1" evidence="4">
    <location>
        <begin position="379"/>
        <end position="414"/>
    </location>
</feature>
<feature type="domain" description="EF-hand 2" evidence="4">
    <location>
        <begin position="451"/>
        <end position="486"/>
    </location>
</feature>
<feature type="region of interest" description="Disordered" evidence="5">
    <location>
        <begin position="1"/>
        <end position="25"/>
    </location>
</feature>
<feature type="short sequence motif" description="HXXXXD motif" evidence="1">
    <location>
        <begin position="135"/>
        <end position="140"/>
    </location>
</feature>
<feature type="short sequence motif" description="Di-lysine motif" evidence="1">
    <location>
        <begin position="531"/>
        <end position="534"/>
    </location>
</feature>
<feature type="compositionally biased region" description="Low complexity" evidence="5">
    <location>
        <begin position="8"/>
        <end position="19"/>
    </location>
</feature>
<feature type="binding site" evidence="4">
    <location>
        <position position="392"/>
    </location>
    <ligand>
        <name>Ca(2+)</name>
        <dbReference type="ChEBI" id="CHEBI:29108"/>
    </ligand>
</feature>
<feature type="binding site" evidence="4">
    <location>
        <position position="394"/>
    </location>
    <ligand>
        <name>Ca(2+)</name>
        <dbReference type="ChEBI" id="CHEBI:29108"/>
    </ligand>
</feature>
<feature type="binding site" evidence="4">
    <location>
        <position position="398"/>
    </location>
    <ligand>
        <name>Ca(2+)</name>
        <dbReference type="ChEBI" id="CHEBI:29108"/>
    </ligand>
</feature>
<feature type="binding site" evidence="4">
    <location>
        <position position="403"/>
    </location>
    <ligand>
        <name>Ca(2+)</name>
        <dbReference type="ChEBI" id="CHEBI:29108"/>
    </ligand>
</feature>
<keyword id="KW-0012">Acyltransferase</keyword>
<keyword id="KW-0106">Calcium</keyword>
<keyword id="KW-1003">Cell membrane</keyword>
<keyword id="KW-0256">Endoplasmic reticulum</keyword>
<keyword id="KW-0333">Golgi apparatus</keyword>
<keyword id="KW-0444">Lipid biosynthesis</keyword>
<keyword id="KW-0551">Lipid droplet</keyword>
<keyword id="KW-0443">Lipid metabolism</keyword>
<keyword id="KW-0472">Membrane</keyword>
<keyword id="KW-0479">Metal-binding</keyword>
<keyword id="KW-0594">Phospholipid biosynthesis</keyword>
<keyword id="KW-1208">Phospholipid metabolism</keyword>
<keyword id="KW-1185">Reference proteome</keyword>
<keyword id="KW-0677">Repeat</keyword>
<keyword id="KW-0735">Signal-anchor</keyword>
<keyword id="KW-0808">Transferase</keyword>
<keyword id="KW-0812">Transmembrane</keyword>
<keyword id="KW-1133">Transmembrane helix</keyword>
<dbReference type="EC" id="2.3.1.23" evidence="7"/>
<dbReference type="EC" id="2.3.1.51" evidence="7"/>
<dbReference type="EC" id="2.3.1.25" evidence="1"/>
<dbReference type="EC" id="2.3.1.67" evidence="1"/>
<dbReference type="EMBL" id="AABR03001349">
    <property type="status" value="NOT_ANNOTATED_CDS"/>
    <property type="molecule type" value="Genomic_DNA"/>
</dbReference>
<dbReference type="EMBL" id="AABR03001854">
    <property type="status" value="NOT_ANNOTATED_CDS"/>
    <property type="molecule type" value="Genomic_DNA"/>
</dbReference>
<dbReference type="EMBL" id="AB244983">
    <property type="protein sequence ID" value="BAE94689.2"/>
    <property type="molecule type" value="mRNA"/>
</dbReference>
<dbReference type="RefSeq" id="NP_001094205.1">
    <property type="nucleotide sequence ID" value="NM_001100735.1"/>
</dbReference>
<dbReference type="SMR" id="Q1HAQ0"/>
<dbReference type="FunCoup" id="Q1HAQ0">
    <property type="interactions" value="2583"/>
</dbReference>
<dbReference type="STRING" id="10116.ENSRNOP00000024111"/>
<dbReference type="SwissLipids" id="SLP:000000296"/>
<dbReference type="GlyGen" id="Q1HAQ0">
    <property type="glycosylation" value="1 site"/>
</dbReference>
<dbReference type="PhosphoSitePlus" id="Q1HAQ0"/>
<dbReference type="SwissPalm" id="Q1HAQ0"/>
<dbReference type="jPOST" id="Q1HAQ0"/>
<dbReference type="PaxDb" id="10116-ENSRNOP00000024111"/>
<dbReference type="Ensembl" id="ENSRNOT00000024111.6">
    <property type="protein sequence ID" value="ENSRNOP00000024111.5"/>
    <property type="gene ID" value="ENSRNOG00000017930.6"/>
</dbReference>
<dbReference type="GeneID" id="361467"/>
<dbReference type="KEGG" id="rno:361467"/>
<dbReference type="UCSC" id="RGD:1311599">
    <property type="organism name" value="rat"/>
</dbReference>
<dbReference type="AGR" id="RGD:1311599"/>
<dbReference type="CTD" id="79888"/>
<dbReference type="RGD" id="1311599">
    <property type="gene designation" value="Lpcat1"/>
</dbReference>
<dbReference type="eggNOG" id="KOG4666">
    <property type="taxonomic scope" value="Eukaryota"/>
</dbReference>
<dbReference type="GeneTree" id="ENSGT01030000234574"/>
<dbReference type="HOGENOM" id="CLU_025017_0_1_1"/>
<dbReference type="InParanoid" id="Q1HAQ0"/>
<dbReference type="OMA" id="TEDDLAC"/>
<dbReference type="OrthoDB" id="272512at2759"/>
<dbReference type="PhylomeDB" id="Q1HAQ0"/>
<dbReference type="TreeFam" id="TF323244"/>
<dbReference type="BRENDA" id="2.3.1.23">
    <property type="organism ID" value="5301"/>
</dbReference>
<dbReference type="Reactome" id="R-RNO-1482788">
    <property type="pathway name" value="Acyl chain remodelling of PC"/>
</dbReference>
<dbReference type="Reactome" id="R-RNO-1482925">
    <property type="pathway name" value="Acyl chain remodelling of PG"/>
</dbReference>
<dbReference type="Reactome" id="R-RNO-1483166">
    <property type="pathway name" value="Synthesis of PA"/>
</dbReference>
<dbReference type="Reactome" id="R-RNO-1483191">
    <property type="pathway name" value="Synthesis of PC"/>
</dbReference>
<dbReference type="Reactome" id="R-RNO-6798695">
    <property type="pathway name" value="Neutrophil degranulation"/>
</dbReference>
<dbReference type="UniPathway" id="UPA00085"/>
<dbReference type="PRO" id="PR:Q1HAQ0"/>
<dbReference type="Proteomes" id="UP000002494">
    <property type="component" value="Chromosome 1"/>
</dbReference>
<dbReference type="Bgee" id="ENSRNOG00000017930">
    <property type="expression patterns" value="Expressed in lung and 20 other cell types or tissues"/>
</dbReference>
<dbReference type="GO" id="GO:0005783">
    <property type="term" value="C:endoplasmic reticulum"/>
    <property type="evidence" value="ECO:0000250"/>
    <property type="project" value="UniProtKB"/>
</dbReference>
<dbReference type="GO" id="GO:0005789">
    <property type="term" value="C:endoplasmic reticulum membrane"/>
    <property type="evidence" value="ECO:0007669"/>
    <property type="project" value="UniProtKB-SubCell"/>
</dbReference>
<dbReference type="GO" id="GO:0005794">
    <property type="term" value="C:Golgi apparatus"/>
    <property type="evidence" value="ECO:0000250"/>
    <property type="project" value="UniProtKB"/>
</dbReference>
<dbReference type="GO" id="GO:0000139">
    <property type="term" value="C:Golgi membrane"/>
    <property type="evidence" value="ECO:0007669"/>
    <property type="project" value="UniProtKB-SubCell"/>
</dbReference>
<dbReference type="GO" id="GO:0005811">
    <property type="term" value="C:lipid droplet"/>
    <property type="evidence" value="ECO:0007669"/>
    <property type="project" value="UniProtKB-SubCell"/>
</dbReference>
<dbReference type="GO" id="GO:0016020">
    <property type="term" value="C:membrane"/>
    <property type="evidence" value="ECO:0000266"/>
    <property type="project" value="RGD"/>
</dbReference>
<dbReference type="GO" id="GO:0005886">
    <property type="term" value="C:plasma membrane"/>
    <property type="evidence" value="ECO:0007669"/>
    <property type="project" value="UniProtKB-SubCell"/>
</dbReference>
<dbReference type="GO" id="GO:0003841">
    <property type="term" value="F:1-acylglycerol-3-phosphate O-acyltransferase activity"/>
    <property type="evidence" value="ECO:0000314"/>
    <property type="project" value="UniProtKB"/>
</dbReference>
<dbReference type="GO" id="GO:0047184">
    <property type="term" value="F:1-acylglycerophosphocholine O-acyltransferase activity"/>
    <property type="evidence" value="ECO:0000314"/>
    <property type="project" value="UniProtKB"/>
</dbReference>
<dbReference type="GO" id="GO:0047192">
    <property type="term" value="F:1-alkylglycerophosphocholine O-acetyltransferase activity"/>
    <property type="evidence" value="ECO:0000250"/>
    <property type="project" value="UniProtKB"/>
</dbReference>
<dbReference type="GO" id="GO:0047191">
    <property type="term" value="F:1-alkylglycerophosphocholine O-acyltransferase activity"/>
    <property type="evidence" value="ECO:0000266"/>
    <property type="project" value="RGD"/>
</dbReference>
<dbReference type="GO" id="GO:0005509">
    <property type="term" value="F:calcium ion binding"/>
    <property type="evidence" value="ECO:0007669"/>
    <property type="project" value="InterPro"/>
</dbReference>
<dbReference type="GO" id="GO:0042171">
    <property type="term" value="F:lysophosphatidic acid acyltransferase activity"/>
    <property type="evidence" value="ECO:0000318"/>
    <property type="project" value="GO_Central"/>
</dbReference>
<dbReference type="GO" id="GO:0047159">
    <property type="term" value="F:plasmalogen synthase activity"/>
    <property type="evidence" value="ECO:0000250"/>
    <property type="project" value="UniProtKB"/>
</dbReference>
<dbReference type="GO" id="GO:2001246">
    <property type="term" value="P:negative regulation of phosphatidylcholine biosynthetic process"/>
    <property type="evidence" value="ECO:0000266"/>
    <property type="project" value="RGD"/>
</dbReference>
<dbReference type="GO" id="GO:0036151">
    <property type="term" value="P:phosphatidylcholine acyl-chain remodeling"/>
    <property type="evidence" value="ECO:0000266"/>
    <property type="project" value="RGD"/>
</dbReference>
<dbReference type="GO" id="GO:0006656">
    <property type="term" value="P:phosphatidylcholine biosynthetic process"/>
    <property type="evidence" value="ECO:0000266"/>
    <property type="project" value="RGD"/>
</dbReference>
<dbReference type="GO" id="GO:0008654">
    <property type="term" value="P:phospholipid biosynthetic process"/>
    <property type="evidence" value="ECO:0000250"/>
    <property type="project" value="UniProtKB"/>
</dbReference>
<dbReference type="GO" id="GO:0045732">
    <property type="term" value="P:positive regulation of protein catabolic process"/>
    <property type="evidence" value="ECO:0000266"/>
    <property type="project" value="RGD"/>
</dbReference>
<dbReference type="GO" id="GO:0030163">
    <property type="term" value="P:protein catabolic process"/>
    <property type="evidence" value="ECO:0000266"/>
    <property type="project" value="RGD"/>
</dbReference>
<dbReference type="GO" id="GO:0060041">
    <property type="term" value="P:retina development in camera-type eye"/>
    <property type="evidence" value="ECO:0000266"/>
    <property type="project" value="RGD"/>
</dbReference>
<dbReference type="GO" id="GO:0043129">
    <property type="term" value="P:surfactant homeostasis"/>
    <property type="evidence" value="ECO:0000266"/>
    <property type="project" value="RGD"/>
</dbReference>
<dbReference type="CDD" id="cd07991">
    <property type="entry name" value="LPLAT_LPCAT1-like"/>
    <property type="match status" value="1"/>
</dbReference>
<dbReference type="FunFam" id="1.10.238.10:FF:000379">
    <property type="entry name" value="Lysophosphatidylcholine acyltransferase 1"/>
    <property type="match status" value="1"/>
</dbReference>
<dbReference type="Gene3D" id="1.10.238.10">
    <property type="entry name" value="EF-hand"/>
    <property type="match status" value="1"/>
</dbReference>
<dbReference type="InterPro" id="IPR011992">
    <property type="entry name" value="EF-hand-dom_pair"/>
</dbReference>
<dbReference type="InterPro" id="IPR018247">
    <property type="entry name" value="EF_Hand_1_Ca_BS"/>
</dbReference>
<dbReference type="InterPro" id="IPR002048">
    <property type="entry name" value="EF_hand_dom"/>
</dbReference>
<dbReference type="InterPro" id="IPR045252">
    <property type="entry name" value="LPCAT1-like"/>
</dbReference>
<dbReference type="InterPro" id="IPR002123">
    <property type="entry name" value="Plipid/glycerol_acylTrfase"/>
</dbReference>
<dbReference type="PANTHER" id="PTHR23063:SF57">
    <property type="entry name" value="LYSOPHOSPHATIDYLCHOLINE ACYLTRANSFERASE 1"/>
    <property type="match status" value="1"/>
</dbReference>
<dbReference type="PANTHER" id="PTHR23063">
    <property type="entry name" value="PHOSPHOLIPID ACYLTRANSFERASE"/>
    <property type="match status" value="1"/>
</dbReference>
<dbReference type="Pfam" id="PF01553">
    <property type="entry name" value="Acyltransferase"/>
    <property type="match status" value="1"/>
</dbReference>
<dbReference type="Pfam" id="PF13833">
    <property type="entry name" value="EF-hand_8"/>
    <property type="match status" value="1"/>
</dbReference>
<dbReference type="SMART" id="SM00054">
    <property type="entry name" value="EFh"/>
    <property type="match status" value="3"/>
</dbReference>
<dbReference type="SMART" id="SM00563">
    <property type="entry name" value="PlsC"/>
    <property type="match status" value="1"/>
</dbReference>
<dbReference type="SUPFAM" id="SSF47473">
    <property type="entry name" value="EF-hand"/>
    <property type="match status" value="1"/>
</dbReference>
<dbReference type="SUPFAM" id="SSF69593">
    <property type="entry name" value="Glycerol-3-phosphate (1)-acyltransferase"/>
    <property type="match status" value="1"/>
</dbReference>
<dbReference type="PROSITE" id="PS00018">
    <property type="entry name" value="EF_HAND_1"/>
    <property type="match status" value="1"/>
</dbReference>
<dbReference type="PROSITE" id="PS50222">
    <property type="entry name" value="EF_HAND_2"/>
    <property type="match status" value="2"/>
</dbReference>
<accession>Q1HAQ0</accession>
<sequence length="534" mass="59762">MRLRGRGPRAAPSSSSGAGDARRLAPPGRNPFVHELRLSALQKAQVAFMTLTLFPIRLLFAAFMMLLAWPFALVASLGPPDKEPEQPLALWRKVVDFLLKAIMRTMWFAGGFHRVAVKGRQALPTEAAILTLAPHSSYFDAIPVTMTMSSIVMKAESRDIPIWGTLIRYIRPVFVSRSDQDSRRKTVEEIKRRAQSNGKWPQIMIFPEGTCTNRTCLITFKPGAFIPGVPVQPVVLRYPNKLDTITWTWQGPGALKILWLTLCQFQNQVEIEFLPVYCPSEEEKRNPALYASNVRRVMAKALGVSVTDYTFEDCQLALAEGQLRLPADTCLLEFARLVRGLGLKPENLEKDLDKYSESARMKRGEKIRLPEFAAYLEVPVSDALEDMFSLFDESGGGEIDLREYVVALSVVCRPSQTLATIQLAFKMYGSPEDGSIDEADLSCILKTALGISELTVTDLFQAIDQEERGRITFDDFCGFAEMYPDFAEDYLYPDQTHSDSCAQTPPAPTPNGFCIDFSPEHSDFGRKNSCKKVD</sequence>
<organism>
    <name type="scientific">Rattus norvegicus</name>
    <name type="common">Rat</name>
    <dbReference type="NCBI Taxonomy" id="10116"/>
    <lineage>
        <taxon>Eukaryota</taxon>
        <taxon>Metazoa</taxon>
        <taxon>Chordata</taxon>
        <taxon>Craniata</taxon>
        <taxon>Vertebrata</taxon>
        <taxon>Euteleostomi</taxon>
        <taxon>Mammalia</taxon>
        <taxon>Eutheria</taxon>
        <taxon>Euarchontoglires</taxon>
        <taxon>Glires</taxon>
        <taxon>Rodentia</taxon>
        <taxon>Myomorpha</taxon>
        <taxon>Muroidea</taxon>
        <taxon>Muridae</taxon>
        <taxon>Murinae</taxon>
        <taxon>Rattus</taxon>
    </lineage>
</organism>
<gene>
    <name type="primary">Lpcat1</name>
    <name type="synonym">Aytl2</name>
</gene>
<evidence type="ECO:0000250" key="1">
    <source>
        <dbReference type="UniProtKB" id="Q3TFD2"/>
    </source>
</evidence>
<evidence type="ECO:0000250" key="2">
    <source>
        <dbReference type="UniProtKB" id="Q8NF37"/>
    </source>
</evidence>
<evidence type="ECO:0000255" key="3"/>
<evidence type="ECO:0000255" key="4">
    <source>
        <dbReference type="PROSITE-ProRule" id="PRU00448"/>
    </source>
</evidence>
<evidence type="ECO:0000256" key="5">
    <source>
        <dbReference type="SAM" id="MobiDB-lite"/>
    </source>
</evidence>
<evidence type="ECO:0000269" key="6">
    <source>
    </source>
</evidence>
<evidence type="ECO:0000269" key="7">
    <source>
    </source>
</evidence>
<evidence type="ECO:0000305" key="8"/>
<evidence type="ECO:0000305" key="9">
    <source>
    </source>
</evidence>
<proteinExistence type="evidence at protein level"/>
<reference key="1">
    <citation type="journal article" date="2006" name="Proc. Natl. Acad. Sci. U.S.A.">
        <title>Identification and characterization of a lysophosphatidylcholine acyltransferase in alveolar type II cells.</title>
        <authorList>
            <person name="Chen X."/>
            <person name="Hyatt B.A."/>
            <person name="Mucenski M.L."/>
            <person name="Mason R.J."/>
            <person name="Shannon J.M."/>
        </authorList>
    </citation>
    <scope>NUCLEOTIDE SEQUENCE [MRNA]</scope>
    <scope>FUNCTION</scope>
    <scope>CATALYTIC ACTIVITY</scope>
    <scope>TISSUE SPECIFICITY</scope>
    <scope>INDUCTION</scope>
    <scope>ACTIVITY REGULATION</scope>
</reference>
<reference key="2">
    <citation type="journal article" date="2004" name="Nature">
        <title>Genome sequence of the Brown Norway rat yields insights into mammalian evolution.</title>
        <authorList>
            <person name="Gibbs R.A."/>
            <person name="Weinstock G.M."/>
            <person name="Metzker M.L."/>
            <person name="Muzny D.M."/>
            <person name="Sodergren E.J."/>
            <person name="Scherer S."/>
            <person name="Scott G."/>
            <person name="Steffen D."/>
            <person name="Worley K.C."/>
            <person name="Burch P.E."/>
            <person name="Okwuonu G."/>
            <person name="Hines S."/>
            <person name="Lewis L."/>
            <person name="Deramo C."/>
            <person name="Delgado O."/>
            <person name="Dugan-Rocha S."/>
            <person name="Miner G."/>
            <person name="Morgan M."/>
            <person name="Hawes A."/>
            <person name="Gill R."/>
            <person name="Holt R.A."/>
            <person name="Adams M.D."/>
            <person name="Amanatides P.G."/>
            <person name="Baden-Tillson H."/>
            <person name="Barnstead M."/>
            <person name="Chin S."/>
            <person name="Evans C.A."/>
            <person name="Ferriera S."/>
            <person name="Fosler C."/>
            <person name="Glodek A."/>
            <person name="Gu Z."/>
            <person name="Jennings D."/>
            <person name="Kraft C.L."/>
            <person name="Nguyen T."/>
            <person name="Pfannkoch C.M."/>
            <person name="Sitter C."/>
            <person name="Sutton G.G."/>
            <person name="Venter J.C."/>
            <person name="Woodage T."/>
            <person name="Smith D."/>
            <person name="Lee H.-M."/>
            <person name="Gustafson E."/>
            <person name="Cahill P."/>
            <person name="Kana A."/>
            <person name="Doucette-Stamm L."/>
            <person name="Weinstock K."/>
            <person name="Fechtel K."/>
            <person name="Weiss R.B."/>
            <person name="Dunn D.M."/>
            <person name="Green E.D."/>
            <person name="Blakesley R.W."/>
            <person name="Bouffard G.G."/>
            <person name="De Jong P.J."/>
            <person name="Osoegawa K."/>
            <person name="Zhu B."/>
            <person name="Marra M."/>
            <person name="Schein J."/>
            <person name="Bosdet I."/>
            <person name="Fjell C."/>
            <person name="Jones S."/>
            <person name="Krzywinski M."/>
            <person name="Mathewson C."/>
            <person name="Siddiqui A."/>
            <person name="Wye N."/>
            <person name="McPherson J."/>
            <person name="Zhao S."/>
            <person name="Fraser C.M."/>
            <person name="Shetty J."/>
            <person name="Shatsman S."/>
            <person name="Geer K."/>
            <person name="Chen Y."/>
            <person name="Abramzon S."/>
            <person name="Nierman W.C."/>
            <person name="Havlak P.H."/>
            <person name="Chen R."/>
            <person name="Durbin K.J."/>
            <person name="Egan A."/>
            <person name="Ren Y."/>
            <person name="Song X.-Z."/>
            <person name="Li B."/>
            <person name="Liu Y."/>
            <person name="Qin X."/>
            <person name="Cawley S."/>
            <person name="Cooney A.J."/>
            <person name="D'Souza L.M."/>
            <person name="Martin K."/>
            <person name="Wu J.Q."/>
            <person name="Gonzalez-Garay M.L."/>
            <person name="Jackson A.R."/>
            <person name="Kalafus K.J."/>
            <person name="McLeod M.P."/>
            <person name="Milosavljevic A."/>
            <person name="Virk D."/>
            <person name="Volkov A."/>
            <person name="Wheeler D.A."/>
            <person name="Zhang Z."/>
            <person name="Bailey J.A."/>
            <person name="Eichler E.E."/>
            <person name="Tuzun E."/>
            <person name="Birney E."/>
            <person name="Mongin E."/>
            <person name="Ureta-Vidal A."/>
            <person name="Woodwark C."/>
            <person name="Zdobnov E."/>
            <person name="Bork P."/>
            <person name="Suyama M."/>
            <person name="Torrents D."/>
            <person name="Alexandersson M."/>
            <person name="Trask B.J."/>
            <person name="Young J.M."/>
            <person name="Huang H."/>
            <person name="Wang H."/>
            <person name="Xing H."/>
            <person name="Daniels S."/>
            <person name="Gietzen D."/>
            <person name="Schmidt J."/>
            <person name="Stevens K."/>
            <person name="Vitt U."/>
            <person name="Wingrove J."/>
            <person name="Camara F."/>
            <person name="Mar Alba M."/>
            <person name="Abril J.F."/>
            <person name="Guigo R."/>
            <person name="Smit A."/>
            <person name="Dubchak I."/>
            <person name="Rubin E.M."/>
            <person name="Couronne O."/>
            <person name="Poliakov A."/>
            <person name="Huebner N."/>
            <person name="Ganten D."/>
            <person name="Goesele C."/>
            <person name="Hummel O."/>
            <person name="Kreitler T."/>
            <person name="Lee Y.-A."/>
            <person name="Monti J."/>
            <person name="Schulz H."/>
            <person name="Zimdahl H."/>
            <person name="Himmelbauer H."/>
            <person name="Lehrach H."/>
            <person name="Jacob H.J."/>
            <person name="Bromberg S."/>
            <person name="Gullings-Handley J."/>
            <person name="Jensen-Seaman M.I."/>
            <person name="Kwitek A.E."/>
            <person name="Lazar J."/>
            <person name="Pasko D."/>
            <person name="Tonellato P.J."/>
            <person name="Twigger S."/>
            <person name="Ponting C.P."/>
            <person name="Duarte J.M."/>
            <person name="Rice S."/>
            <person name="Goodstadt L."/>
            <person name="Beatson S.A."/>
            <person name="Emes R.D."/>
            <person name="Winter E.E."/>
            <person name="Webber C."/>
            <person name="Brandt P."/>
            <person name="Nyakatura G."/>
            <person name="Adetobi M."/>
            <person name="Chiaromonte F."/>
            <person name="Elnitski L."/>
            <person name="Eswara P."/>
            <person name="Hardison R.C."/>
            <person name="Hou M."/>
            <person name="Kolbe D."/>
            <person name="Makova K."/>
            <person name="Miller W."/>
            <person name="Nekrutenko A."/>
            <person name="Riemer C."/>
            <person name="Schwartz S."/>
            <person name="Taylor J."/>
            <person name="Yang S."/>
            <person name="Zhang Y."/>
            <person name="Lindpaintner K."/>
            <person name="Andrews T.D."/>
            <person name="Caccamo M."/>
            <person name="Clamp M."/>
            <person name="Clarke L."/>
            <person name="Curwen V."/>
            <person name="Durbin R.M."/>
            <person name="Eyras E."/>
            <person name="Searle S.M."/>
            <person name="Cooper G.M."/>
            <person name="Batzoglou S."/>
            <person name="Brudno M."/>
            <person name="Sidow A."/>
            <person name="Stone E.A."/>
            <person name="Payseur B.A."/>
            <person name="Bourque G."/>
            <person name="Lopez-Otin C."/>
            <person name="Puente X.S."/>
            <person name="Chakrabarti K."/>
            <person name="Chatterji S."/>
            <person name="Dewey C."/>
            <person name="Pachter L."/>
            <person name="Bray N."/>
            <person name="Yap V.B."/>
            <person name="Caspi A."/>
            <person name="Tesler G."/>
            <person name="Pevzner P.A."/>
            <person name="Haussler D."/>
            <person name="Roskin K.M."/>
            <person name="Baertsch R."/>
            <person name="Clawson H."/>
            <person name="Furey T.S."/>
            <person name="Hinrichs A.S."/>
            <person name="Karolchik D."/>
            <person name="Kent W.J."/>
            <person name="Rosenbloom K.R."/>
            <person name="Trumbower H."/>
            <person name="Weirauch M."/>
            <person name="Cooper D.N."/>
            <person name="Stenson P.D."/>
            <person name="Ma B."/>
            <person name="Brent M."/>
            <person name="Arumugam M."/>
            <person name="Shteynberg D."/>
            <person name="Copley R.R."/>
            <person name="Taylor M.S."/>
            <person name="Riethman H."/>
            <person name="Mudunuri U."/>
            <person name="Peterson J."/>
            <person name="Guyer M."/>
            <person name="Felsenfeld A."/>
            <person name="Old S."/>
            <person name="Mockrin S."/>
            <person name="Collins F.S."/>
        </authorList>
    </citation>
    <scope>NUCLEOTIDE SEQUENCE [LARGE SCALE GENOMIC DNA]</scope>
    <source>
        <strain>Brown Norway</strain>
    </source>
</reference>
<reference key="3">
    <citation type="journal article" date="2006" name="J. Biol. Chem.">
        <title>Cloning and characterization of mouse lung-type acyl-CoA:lysophosphatidylcholine acyltransferase 1 (LPCAT1): expression in alveolar type II cells and possible involvement in surfactant production.</title>
        <authorList>
            <person name="Nakanishi H."/>
            <person name="Shindou H."/>
            <person name="Hishikawa D."/>
            <person name="Harayama T."/>
            <person name="Ogasawara R."/>
            <person name="Suwabe A."/>
            <person name="Taguchi R."/>
            <person name="Shimizu T."/>
        </authorList>
    </citation>
    <scope>NUCLEOTIDE SEQUENCE [MRNA] OF 46-534</scope>
    <scope>TISSUE SPECIFICITY</scope>
</reference>
<comment type="function">
    <text evidence="1 2 7">Exhibits acyltransferase activity (PubMed:16864775). Exhibits acetyltransferase activity (By similarity). Activity is calcium-independent (By similarity). Catalyzes the conversion of lysophosphatidylcholine (1-acyl-sn-glycero-3-phosphocholine or LPC) into phosphatidylcholine (1,2-diacyl-sn-glycero-3-phosphocholine or PC) (PubMed:16864775). Catalyzes the conversion 1-acyl-sn-glycerol-3-phosphate (lysophosphatidic acid or LPA) into 1,2-diacyl-sn-glycerol-3-phosphate (phosphatidic acid or PA) by incorporating an acyl moiety at the sn-2 position of the glycerol backbone (PubMed:16864775). Displays a clear preference for saturated fatty acyl-CoAs, and 1-myristoyl or 1-palmitoyl LPC as acyl donors and acceptors, respectively (By similarity). Involved in platelet-activating factor (PAF) biosynthesis by catalyzing the conversion of the PAF precursor, 1-O-alkyl-sn-glycero-3-phosphocholine (lyso-PAF) into 1-O-alkyl-2-acetyl-sn-glycero-3-phosphocholine (PAF) (By similarity). May synthesize phosphatidylcholine in pulmonary surfactant, thereby playing a pivotal role in respiratory physiology (PubMed:16864775). Involved in the regulation of lipid droplet number and size (By similarity).</text>
</comment>
<comment type="catalytic activity">
    <reaction evidence="7">
        <text>a 1-acyl-sn-glycero-3-phosphocholine + an acyl-CoA = a 1,2-diacyl-sn-glycero-3-phosphocholine + CoA</text>
        <dbReference type="Rhea" id="RHEA:12937"/>
        <dbReference type="ChEBI" id="CHEBI:57287"/>
        <dbReference type="ChEBI" id="CHEBI:57643"/>
        <dbReference type="ChEBI" id="CHEBI:58168"/>
        <dbReference type="ChEBI" id="CHEBI:58342"/>
        <dbReference type="EC" id="2.3.1.23"/>
    </reaction>
</comment>
<comment type="catalytic activity">
    <reaction evidence="1">
        <text>a 1-O-alkyl-sn-glycero-3-phosphocholine + acetyl-CoA = a 1-O-alkyl-2-acetyl-sn-glycero-3-phosphocholine + CoA</text>
        <dbReference type="Rhea" id="RHEA:18461"/>
        <dbReference type="ChEBI" id="CHEBI:30909"/>
        <dbReference type="ChEBI" id="CHEBI:36707"/>
        <dbReference type="ChEBI" id="CHEBI:57287"/>
        <dbReference type="ChEBI" id="CHEBI:57288"/>
        <dbReference type="EC" id="2.3.1.67"/>
    </reaction>
</comment>
<comment type="catalytic activity">
    <reaction evidence="7">
        <text>a 1-acyl-sn-glycero-3-phosphate + an acyl-CoA = a 1,2-diacyl-sn-glycero-3-phosphate + CoA</text>
        <dbReference type="Rhea" id="RHEA:19709"/>
        <dbReference type="ChEBI" id="CHEBI:57287"/>
        <dbReference type="ChEBI" id="CHEBI:57970"/>
        <dbReference type="ChEBI" id="CHEBI:58342"/>
        <dbReference type="ChEBI" id="CHEBI:58608"/>
        <dbReference type="EC" id="2.3.1.51"/>
    </reaction>
</comment>
<comment type="catalytic activity">
    <reaction evidence="1">
        <text>a 1-O-(1Z-alkenyl)-sn-glycero-3-phosphocholine + an acyl-CoA = a 1-O-(1Z-alkenyl)-2-acyl-sn-glycero-3-phosphocholine + CoA</text>
        <dbReference type="Rhea" id="RHEA:10344"/>
        <dbReference type="ChEBI" id="CHEBI:57287"/>
        <dbReference type="ChEBI" id="CHEBI:58342"/>
        <dbReference type="ChEBI" id="CHEBI:77286"/>
        <dbReference type="ChEBI" id="CHEBI:77287"/>
        <dbReference type="EC" id="2.3.1.25"/>
    </reaction>
</comment>
<comment type="catalytic activity">
    <reaction evidence="7">
        <text>1-acyl-sn-glycero-3-phospho-(1'-sn-glycerol) + an acyl-CoA = a 1,2-diacyl-sn-glycero-3-phospho-(1'-sn-glycerol) + CoA</text>
        <dbReference type="Rhea" id="RHEA:33203"/>
        <dbReference type="ChEBI" id="CHEBI:57287"/>
        <dbReference type="ChEBI" id="CHEBI:58342"/>
        <dbReference type="ChEBI" id="CHEBI:64716"/>
        <dbReference type="ChEBI" id="CHEBI:64840"/>
    </reaction>
    <physiologicalReaction direction="left-to-right" evidence="9">
        <dbReference type="Rhea" id="RHEA:33204"/>
    </physiologicalReaction>
</comment>
<comment type="catalytic activity">
    <reaction evidence="7">
        <text>a 1-acyl-sn-glycero-3-phosphocholine + hexadecanoyl-CoA = 1-acyl-2-hexadecanoyl-sn-glycero-3-phosphocholine + CoA</text>
        <dbReference type="Rhea" id="RHEA:37803"/>
        <dbReference type="ChEBI" id="CHEBI:57287"/>
        <dbReference type="ChEBI" id="CHEBI:57379"/>
        <dbReference type="ChEBI" id="CHEBI:58168"/>
        <dbReference type="ChEBI" id="CHEBI:75279"/>
    </reaction>
    <physiologicalReaction direction="left-to-right" evidence="9">
        <dbReference type="Rhea" id="RHEA:37804"/>
    </physiologicalReaction>
</comment>
<comment type="catalytic activity">
    <reaction evidence="7">
        <text>a 1-acyl-sn-glycero-3-phosphate + hexadecanoyl-CoA = 1-acyl-2-hexadecanoyl-sn-glycero-3-phosphate + CoA</text>
        <dbReference type="Rhea" id="RHEA:33315"/>
        <dbReference type="ChEBI" id="CHEBI:57287"/>
        <dbReference type="ChEBI" id="CHEBI:57379"/>
        <dbReference type="ChEBI" id="CHEBI:57970"/>
        <dbReference type="ChEBI" id="CHEBI:64862"/>
    </reaction>
    <physiologicalReaction direction="left-to-right" evidence="9">
        <dbReference type="Rhea" id="RHEA:33316"/>
    </physiologicalReaction>
</comment>
<comment type="catalytic activity">
    <reaction evidence="7">
        <text>1-acyl-sn-glycero-3-phospho-(1'-sn-glycerol) + hexadecanoyl-CoA = 1-acyl-2-hexadecanoyl-sn-glycero-3-phospho-(1'-sn-glycerol) + CoA</text>
        <dbReference type="Rhea" id="RHEA:37807"/>
        <dbReference type="ChEBI" id="CHEBI:57287"/>
        <dbReference type="ChEBI" id="CHEBI:57379"/>
        <dbReference type="ChEBI" id="CHEBI:64840"/>
        <dbReference type="ChEBI" id="CHEBI:75280"/>
    </reaction>
    <physiologicalReaction direction="left-to-right" evidence="9">
        <dbReference type="Rhea" id="RHEA:37808"/>
    </physiologicalReaction>
</comment>
<comment type="catalytic activity">
    <reaction evidence="1">
        <text>1-hexadecanoyl-sn-glycero-3-phosphocholine + hexadecanoyl-CoA = 1,2-dihexadecanoyl-sn-glycero-3-phosphocholine + CoA</text>
        <dbReference type="Rhea" id="RHEA:35983"/>
        <dbReference type="ChEBI" id="CHEBI:57287"/>
        <dbReference type="ChEBI" id="CHEBI:57379"/>
        <dbReference type="ChEBI" id="CHEBI:72998"/>
        <dbReference type="ChEBI" id="CHEBI:72999"/>
    </reaction>
    <physiologicalReaction direction="left-to-right" evidence="1">
        <dbReference type="Rhea" id="RHEA:35984"/>
    </physiologicalReaction>
</comment>
<comment type="catalytic activity">
    <reaction evidence="1">
        <text>1-O-hexadecyl-sn-glycero-3-phosphocholine + hexadecanoyl-CoA = 1-O-hexadecyl-2-hexadecanoyl-sn-glycero-3-phosphocholine + CoA</text>
        <dbReference type="Rhea" id="RHEA:37811"/>
        <dbReference type="ChEBI" id="CHEBI:57287"/>
        <dbReference type="ChEBI" id="CHEBI:57379"/>
        <dbReference type="ChEBI" id="CHEBI:64496"/>
        <dbReference type="ChEBI" id="CHEBI:72744"/>
    </reaction>
    <physiologicalReaction direction="left-to-right" evidence="1">
        <dbReference type="Rhea" id="RHEA:37812"/>
    </physiologicalReaction>
</comment>
<comment type="catalytic activity">
    <reaction evidence="1">
        <text>a 1-O-(1Z-alkenyl)-sn-glycero-3-phosphocholine + hexadecanoyl-CoA = 1-O-(1Z)-alkenyl-2-hexadecanoyl-sn-glycero-3-phosphocholine + CoA</text>
        <dbReference type="Rhea" id="RHEA:37819"/>
        <dbReference type="ChEBI" id="CHEBI:57287"/>
        <dbReference type="ChEBI" id="CHEBI:57379"/>
        <dbReference type="ChEBI" id="CHEBI:77287"/>
        <dbReference type="ChEBI" id="CHEBI:77304"/>
    </reaction>
    <physiologicalReaction direction="left-to-right" evidence="1">
        <dbReference type="Rhea" id="RHEA:37820"/>
    </physiologicalReaction>
</comment>
<comment type="catalytic activity">
    <reaction evidence="1">
        <text>1-hexadecanoyl-sn-glycero-3-phospho-(1'-sn-glycerol) + hexadecanoyl-CoA = 1,2-dihexadecanoyl-sn-glycero-3-phospho-(1'-sn-glycerol) + CoA</text>
        <dbReference type="Rhea" id="RHEA:35851"/>
        <dbReference type="ChEBI" id="CHEBI:57287"/>
        <dbReference type="ChEBI" id="CHEBI:57379"/>
        <dbReference type="ChEBI" id="CHEBI:72829"/>
        <dbReference type="ChEBI" id="CHEBI:75158"/>
    </reaction>
    <physiologicalReaction direction="left-to-right" evidence="1">
        <dbReference type="Rhea" id="RHEA:35852"/>
    </physiologicalReaction>
</comment>
<comment type="catalytic activity">
    <reaction evidence="1">
        <text>1-dodecanoyl-sn-glycero-3-phosphocholine + hexadecanoyl-CoA = 1-dodecanoyl-2-hexadecanoyl-sn-glycero-3-phosphocholine + CoA</text>
        <dbReference type="Rhea" id="RHEA:37511"/>
        <dbReference type="ChEBI" id="CHEBI:57287"/>
        <dbReference type="ChEBI" id="CHEBI:57379"/>
        <dbReference type="ChEBI" id="CHEBI:74966"/>
        <dbReference type="ChEBI" id="CHEBI:75017"/>
    </reaction>
    <physiologicalReaction direction="left-to-right" evidence="1">
        <dbReference type="Rhea" id="RHEA:37512"/>
    </physiologicalReaction>
</comment>
<comment type="catalytic activity">
    <reaction evidence="1">
        <text>1-tetradecanoyl-sn-glycero-3-phosphocholine + hexadecanoyl-CoA = 1-tetradecanoyl-2-hexadecanoyl-sn-glycero-3-phosphocholine + CoA</text>
        <dbReference type="Rhea" id="RHEA:37655"/>
        <dbReference type="ChEBI" id="CHEBI:57287"/>
        <dbReference type="ChEBI" id="CHEBI:57379"/>
        <dbReference type="ChEBI" id="CHEBI:64489"/>
        <dbReference type="ChEBI" id="CHEBI:75062"/>
    </reaction>
    <physiologicalReaction direction="left-to-right" evidence="1">
        <dbReference type="Rhea" id="RHEA:37656"/>
    </physiologicalReaction>
</comment>
<comment type="catalytic activity">
    <reaction evidence="1">
        <text>1-O-octadecyl-sn-glycero-3-phosphocholine + hexadecanoyl-CoA = 1-O-octadecyl-2-hexadecanoyl-sn-glycero-3-phosphocholine + CoA</text>
        <dbReference type="Rhea" id="RHEA:37839"/>
        <dbReference type="ChEBI" id="CHEBI:57287"/>
        <dbReference type="ChEBI" id="CHEBI:57379"/>
        <dbReference type="ChEBI" id="CHEBI:75216"/>
        <dbReference type="ChEBI" id="CHEBI:75290"/>
    </reaction>
    <physiologicalReaction direction="left-to-right" evidence="1">
        <dbReference type="Rhea" id="RHEA:37840"/>
    </physiologicalReaction>
</comment>
<comment type="catalytic activity">
    <reaction evidence="1">
        <text>1-octadecanoyl-sn-glycero-3-phosphocholine + hexadecanoyl-CoA = 1-octadecanoyl-2-hexadecanoyl-sn-glycero-3-phosphocholine + CoA</text>
        <dbReference type="Rhea" id="RHEA:37527"/>
        <dbReference type="ChEBI" id="CHEBI:57287"/>
        <dbReference type="ChEBI" id="CHEBI:57379"/>
        <dbReference type="ChEBI" id="CHEBI:73858"/>
        <dbReference type="ChEBI" id="CHEBI:75026"/>
    </reaction>
    <physiologicalReaction direction="left-to-right" evidence="1">
        <dbReference type="Rhea" id="RHEA:37528"/>
    </physiologicalReaction>
</comment>
<comment type="catalytic activity">
    <reaction evidence="1">
        <text>1-(9Z-octadecenoyl)-sn-glycero-3-phosphocholine + hexadecanoyl-CoA = 1-(9Z-octadecenoyl)-2-hexadecanoyl-sn-glycero-3-phosphocholine + CoA</text>
        <dbReference type="Rhea" id="RHEA:37383"/>
        <dbReference type="ChEBI" id="CHEBI:28610"/>
        <dbReference type="ChEBI" id="CHEBI:57287"/>
        <dbReference type="ChEBI" id="CHEBI:57379"/>
        <dbReference type="ChEBI" id="CHEBI:74667"/>
    </reaction>
    <physiologicalReaction direction="left-to-right" evidence="1">
        <dbReference type="Rhea" id="RHEA:37384"/>
    </physiologicalReaction>
</comment>
<comment type="catalytic activity">
    <reaction evidence="1">
        <text>1-eicosanoyl-sn-glycero-3-phosphocholine + hexadecanoyl-CoA = 1-eicosanoyl-2-hexadecanoyl-sn-glycero-3-phosphocholine + CoA</text>
        <dbReference type="Rhea" id="RHEA:37843"/>
        <dbReference type="ChEBI" id="CHEBI:57287"/>
        <dbReference type="ChEBI" id="CHEBI:57379"/>
        <dbReference type="ChEBI" id="CHEBI:74968"/>
        <dbReference type="ChEBI" id="CHEBI:75294"/>
    </reaction>
    <physiologicalReaction direction="left-to-right" evidence="1">
        <dbReference type="Rhea" id="RHEA:37844"/>
    </physiologicalReaction>
</comment>
<comment type="catalytic activity">
    <reaction evidence="1">
        <text>hexanoyl-CoA + 1-hexadecanoyl-sn-glycero-3-phosphocholine = 1-hexadecanoyl-2-hexanoyl-sn-glycero-3-phosphocholine + CoA</text>
        <dbReference type="Rhea" id="RHEA:37855"/>
        <dbReference type="ChEBI" id="CHEBI:57287"/>
        <dbReference type="ChEBI" id="CHEBI:62620"/>
        <dbReference type="ChEBI" id="CHEBI:72998"/>
        <dbReference type="ChEBI" id="CHEBI:75301"/>
    </reaction>
    <physiologicalReaction direction="left-to-right" evidence="1">
        <dbReference type="Rhea" id="RHEA:37856"/>
    </physiologicalReaction>
</comment>
<comment type="catalytic activity">
    <reaction evidence="1">
        <text>octanoyl-CoA + 1-hexadecanoyl-sn-glycero-3-phosphocholine = 1-hexadecanoyl-2-octanoyl-sn-glycero-3-phosphocholine + CoA</text>
        <dbReference type="Rhea" id="RHEA:37859"/>
        <dbReference type="ChEBI" id="CHEBI:57287"/>
        <dbReference type="ChEBI" id="CHEBI:57386"/>
        <dbReference type="ChEBI" id="CHEBI:72998"/>
        <dbReference type="ChEBI" id="CHEBI:75302"/>
    </reaction>
    <physiologicalReaction direction="left-to-right" evidence="1">
        <dbReference type="Rhea" id="RHEA:37860"/>
    </physiologicalReaction>
</comment>
<comment type="catalytic activity">
    <reaction evidence="1">
        <text>decanoyl-CoA + 1-hexadecanoyl-sn-glycero-3-phosphocholine = 1-hexadecanoyl-2-decanoyl-sn-glycero-3-phosphocholine + CoA</text>
        <dbReference type="Rhea" id="RHEA:37863"/>
        <dbReference type="ChEBI" id="CHEBI:57287"/>
        <dbReference type="ChEBI" id="CHEBI:61430"/>
        <dbReference type="ChEBI" id="CHEBI:72998"/>
        <dbReference type="ChEBI" id="CHEBI:75300"/>
    </reaction>
    <physiologicalReaction direction="left-to-right" evidence="1">
        <dbReference type="Rhea" id="RHEA:37864"/>
    </physiologicalReaction>
</comment>
<comment type="catalytic activity">
    <reaction evidence="1">
        <text>dodecanoyl-CoA + 1-hexadecanoyl-sn-glycero-3-phosphocholine = 1-hexadecanoyl-2-dodecanoyl-sn-glycero-3-phosphocholine + CoA</text>
        <dbReference type="Rhea" id="RHEA:37515"/>
        <dbReference type="ChEBI" id="CHEBI:57287"/>
        <dbReference type="ChEBI" id="CHEBI:57375"/>
        <dbReference type="ChEBI" id="CHEBI:72998"/>
        <dbReference type="ChEBI" id="CHEBI:75018"/>
    </reaction>
    <physiologicalReaction direction="left-to-right" evidence="1">
        <dbReference type="Rhea" id="RHEA:37516"/>
    </physiologicalReaction>
</comment>
<comment type="catalytic activity">
    <reaction evidence="1">
        <text>tetradecanoyl-CoA + 1-hexadecanoyl-sn-glycero-3-phosphocholine = 1-hexadecanoyl-2-tetradecanoyl-sn-glycero-3-phosphocholine + CoA</text>
        <dbReference type="Rhea" id="RHEA:37867"/>
        <dbReference type="ChEBI" id="CHEBI:57287"/>
        <dbReference type="ChEBI" id="CHEBI:57385"/>
        <dbReference type="ChEBI" id="CHEBI:72998"/>
        <dbReference type="ChEBI" id="CHEBI:75304"/>
    </reaction>
    <physiologicalReaction direction="left-to-right" evidence="1">
        <dbReference type="Rhea" id="RHEA:37868"/>
    </physiologicalReaction>
</comment>
<comment type="catalytic activity">
    <reaction evidence="1">
        <text>1-hexadecanoyl-sn-glycero-3-phosphocholine + (9Z)-octadecenoyl-CoA = 1-hexadecanoyl-2-(9Z-octadecenoyl)-sn-glycero-3-phosphocholine + CoA</text>
        <dbReference type="Rhea" id="RHEA:35991"/>
        <dbReference type="ChEBI" id="CHEBI:57287"/>
        <dbReference type="ChEBI" id="CHEBI:57387"/>
        <dbReference type="ChEBI" id="CHEBI:72998"/>
        <dbReference type="ChEBI" id="CHEBI:73001"/>
    </reaction>
    <physiologicalReaction direction="left-to-right" evidence="1">
        <dbReference type="Rhea" id="RHEA:35992"/>
    </physiologicalReaction>
</comment>
<comment type="catalytic activity">
    <reaction evidence="1">
        <text>(9Z,12Z)-octadecadienoyl-CoA + 1-hexadecanoyl-sn-glycero-3-phosphocholine = 1-hexadecanoyl-2-(9Z,12Z-octadecadienoyl)-sn-glycero-3-phosphocholine + CoA</text>
        <dbReference type="Rhea" id="RHEA:35995"/>
        <dbReference type="ChEBI" id="CHEBI:57287"/>
        <dbReference type="ChEBI" id="CHEBI:57383"/>
        <dbReference type="ChEBI" id="CHEBI:72998"/>
        <dbReference type="ChEBI" id="CHEBI:73002"/>
    </reaction>
    <physiologicalReaction direction="left-to-right" evidence="1">
        <dbReference type="Rhea" id="RHEA:35996"/>
    </physiologicalReaction>
</comment>
<comment type="catalytic activity">
    <reaction evidence="1">
        <text>(4Z,7Z,10Z,13Z,16Z,19Z)-docosahexaenoyl-CoA + 1-hexadecanoyl-sn-glycero-3-phosphocholine = 1-hexadecanoyl-2-(4Z,7Z,10Z,13Z,16Z,19Z-docosahexaenoyl)-sn-glycero-3-phosphocholine + CoA</text>
        <dbReference type="Rhea" id="RHEA:37475"/>
        <dbReference type="ChEBI" id="CHEBI:57287"/>
        <dbReference type="ChEBI" id="CHEBI:72998"/>
        <dbReference type="ChEBI" id="CHEBI:74298"/>
        <dbReference type="ChEBI" id="CHEBI:74963"/>
    </reaction>
    <physiologicalReaction direction="left-to-right" evidence="1">
        <dbReference type="Rhea" id="RHEA:37476"/>
    </physiologicalReaction>
</comment>
<comment type="catalytic activity">
    <reaction evidence="1">
        <text>1-hexadecanoyl-sn-glycero-3-phosphocholine + acetyl-CoA = 1-hexadecanoyl-2-acetyl-sn-glycero-3-phosphocholine + CoA</text>
        <dbReference type="Rhea" id="RHEA:37703"/>
        <dbReference type="ChEBI" id="CHEBI:57287"/>
        <dbReference type="ChEBI" id="CHEBI:57288"/>
        <dbReference type="ChEBI" id="CHEBI:72998"/>
        <dbReference type="ChEBI" id="CHEBI:75219"/>
    </reaction>
    <physiologicalReaction direction="left-to-right" evidence="1">
        <dbReference type="Rhea" id="RHEA:37704"/>
    </physiologicalReaction>
</comment>
<comment type="catalytic activity">
    <reaction evidence="1">
        <text>eicosanoyl-CoA + 1-hexadecanoyl-sn-glycero-3-phosphocholine = 1-hexadecanoyl-2-eicosanoyl-sn-glycero-3-phosphocholine + CoA</text>
        <dbReference type="Rhea" id="RHEA:43264"/>
        <dbReference type="ChEBI" id="CHEBI:57287"/>
        <dbReference type="ChEBI" id="CHEBI:57380"/>
        <dbReference type="ChEBI" id="CHEBI:72998"/>
        <dbReference type="ChEBI" id="CHEBI:82943"/>
    </reaction>
    <physiologicalReaction direction="left-to-right" evidence="1">
        <dbReference type="Rhea" id="RHEA:43265"/>
    </physiologicalReaction>
</comment>
<comment type="catalytic activity">
    <reaction evidence="1">
        <text>1-O-hexadecyl-sn-glycero-3-phosphocholine + acetyl-CoA = 1-O-hexadecyl-2-acetyl-sn-glycero-3-phosphocholine + CoA</text>
        <dbReference type="Rhea" id="RHEA:37719"/>
        <dbReference type="ChEBI" id="CHEBI:44811"/>
        <dbReference type="ChEBI" id="CHEBI:57287"/>
        <dbReference type="ChEBI" id="CHEBI:57288"/>
        <dbReference type="ChEBI" id="CHEBI:64496"/>
    </reaction>
    <physiologicalReaction direction="left-to-right" evidence="1">
        <dbReference type="Rhea" id="RHEA:37720"/>
    </physiologicalReaction>
</comment>
<comment type="activity regulation">
    <text evidence="7">Activity is stimulated by Mg(2+) or Mn(2+).</text>
</comment>
<comment type="pathway">
    <text>Lipid metabolism; phospholipid metabolism.</text>
</comment>
<comment type="subcellular location">
    <subcellularLocation>
        <location evidence="2">Endoplasmic reticulum membrane</location>
        <topology evidence="2">Single-pass type II membrane protein</topology>
    </subcellularLocation>
    <subcellularLocation>
        <location evidence="1">Golgi apparatus membrane</location>
        <topology evidence="2">Single-pass type II membrane protein</topology>
    </subcellularLocation>
    <subcellularLocation>
        <location evidence="2">Cell membrane</location>
        <topology evidence="2">Single-pass type II membrane protein</topology>
    </subcellularLocation>
    <subcellularLocation>
        <location evidence="2">Lipid droplet</location>
    </subcellularLocation>
    <text evidence="2">May adopt a monotopic topology when embedded in the lipid monolayer of the lipid droplet, with both termini exposed to the cytoplasm.</text>
</comment>
<comment type="tissue specificity">
    <text evidence="6 7">Enriched in alveolar type II cells of lung. Also highly expressed in stomach.</text>
</comment>
<comment type="induction">
    <text evidence="7">By FGF7.</text>
</comment>
<comment type="domain">
    <text evidence="1">The HXXXXD motif is essential for acyltransferase activity and may constitute the binding site for the phosphate moiety of the glycerol-3-phosphocholine.</text>
</comment>
<comment type="domain">
    <text evidence="1">The di-lysine motif may confer endoplasmic reticulum localization.</text>
</comment>
<comment type="similarity">
    <text evidence="8">Belongs to the 1-acyl-sn-glycerol-3-phosphate acyltransferase family.</text>
</comment>
<name>PCAT1_RAT</name>